<accession>B0TEJ8</accession>
<proteinExistence type="inferred from homology"/>
<gene>
    <name evidence="1" type="primary">nadK</name>
    <name type="ordered locus">Helmi_04670</name>
    <name type="ORF">HM1_0298</name>
</gene>
<name>NADK_HELMI</name>
<reference key="1">
    <citation type="journal article" date="2008" name="J. Bacteriol.">
        <title>The genome of Heliobacterium modesticaldum, a phototrophic representative of the Firmicutes containing the simplest photosynthetic apparatus.</title>
        <authorList>
            <person name="Sattley W.M."/>
            <person name="Madigan M.T."/>
            <person name="Swingley W.D."/>
            <person name="Cheung P.C."/>
            <person name="Clocksin K.M."/>
            <person name="Conrad A.L."/>
            <person name="Dejesa L.C."/>
            <person name="Honchak B.M."/>
            <person name="Jung D.O."/>
            <person name="Karbach L.E."/>
            <person name="Kurdoglu A."/>
            <person name="Lahiri S."/>
            <person name="Mastrian S.D."/>
            <person name="Page L.E."/>
            <person name="Taylor H.L."/>
            <person name="Wang Z.T."/>
            <person name="Raymond J."/>
            <person name="Chen M."/>
            <person name="Blankenship R.E."/>
            <person name="Touchman J.W."/>
        </authorList>
    </citation>
    <scope>NUCLEOTIDE SEQUENCE [LARGE SCALE GENOMIC DNA]</scope>
    <source>
        <strain>ATCC 51547 / Ice1</strain>
    </source>
</reference>
<feature type="chain" id="PRO_1000120865" description="NAD kinase">
    <location>
        <begin position="1"/>
        <end position="283"/>
    </location>
</feature>
<feature type="active site" description="Proton acceptor" evidence="1">
    <location>
        <position position="67"/>
    </location>
</feature>
<feature type="binding site" evidence="1">
    <location>
        <begin position="67"/>
        <end position="68"/>
    </location>
    <ligand>
        <name>NAD(+)</name>
        <dbReference type="ChEBI" id="CHEBI:57540"/>
    </ligand>
</feature>
<feature type="binding site" evidence="1">
    <location>
        <begin position="141"/>
        <end position="142"/>
    </location>
    <ligand>
        <name>NAD(+)</name>
        <dbReference type="ChEBI" id="CHEBI:57540"/>
    </ligand>
</feature>
<feature type="binding site" evidence="1">
    <location>
        <position position="152"/>
    </location>
    <ligand>
        <name>NAD(+)</name>
        <dbReference type="ChEBI" id="CHEBI:57540"/>
    </ligand>
</feature>
<feature type="binding site" evidence="1">
    <location>
        <position position="171"/>
    </location>
    <ligand>
        <name>NAD(+)</name>
        <dbReference type="ChEBI" id="CHEBI:57540"/>
    </ligand>
</feature>
<feature type="binding site" evidence="1">
    <location>
        <begin position="182"/>
        <end position="187"/>
    </location>
    <ligand>
        <name>NAD(+)</name>
        <dbReference type="ChEBI" id="CHEBI:57540"/>
    </ligand>
</feature>
<feature type="binding site" evidence="1">
    <location>
        <position position="241"/>
    </location>
    <ligand>
        <name>NAD(+)</name>
        <dbReference type="ChEBI" id="CHEBI:57540"/>
    </ligand>
</feature>
<protein>
    <recommendedName>
        <fullName evidence="1">NAD kinase</fullName>
        <ecNumber evidence="1">2.7.1.23</ecNumber>
    </recommendedName>
    <alternativeName>
        <fullName evidence="1">ATP-dependent NAD kinase</fullName>
    </alternativeName>
</protein>
<sequence>MPTVGVVLNDDKPQALEVARRMADWLSQREVPMGIPLTRVAELVHSPSPELRDRLRQLDLIVVLGGDGTLLNTARLAAPHGIPVVGVNLGRLGFLTEVEVSDLFPALERIIAGDYRIEERMMLEARLIRDGLEQPSYFALNDVVVTKGDHPRMIRVEAAVGDEVVWTYSADGLIVSSPTGSTAYSLSAGGPIVSPELHALLLTPISPHALDARPLVIPQDQAVRLTVISSHSHAVVTVDGQPGQPMVCGDSVLVRKASVACRLIRLGERTFFRILREKMQQGR</sequence>
<comment type="function">
    <text evidence="1">Involved in the regulation of the intracellular balance of NAD and NADP, and is a key enzyme in the biosynthesis of NADP. Catalyzes specifically the phosphorylation on 2'-hydroxyl of the adenosine moiety of NAD to yield NADP.</text>
</comment>
<comment type="catalytic activity">
    <reaction evidence="1">
        <text>NAD(+) + ATP = ADP + NADP(+) + H(+)</text>
        <dbReference type="Rhea" id="RHEA:18629"/>
        <dbReference type="ChEBI" id="CHEBI:15378"/>
        <dbReference type="ChEBI" id="CHEBI:30616"/>
        <dbReference type="ChEBI" id="CHEBI:57540"/>
        <dbReference type="ChEBI" id="CHEBI:58349"/>
        <dbReference type="ChEBI" id="CHEBI:456216"/>
        <dbReference type="EC" id="2.7.1.23"/>
    </reaction>
</comment>
<comment type="cofactor">
    <cofactor evidence="1">
        <name>a divalent metal cation</name>
        <dbReference type="ChEBI" id="CHEBI:60240"/>
    </cofactor>
</comment>
<comment type="subcellular location">
    <subcellularLocation>
        <location evidence="1">Cytoplasm</location>
    </subcellularLocation>
</comment>
<comment type="similarity">
    <text evidence="1">Belongs to the NAD kinase family.</text>
</comment>
<evidence type="ECO:0000255" key="1">
    <source>
        <dbReference type="HAMAP-Rule" id="MF_00361"/>
    </source>
</evidence>
<organism>
    <name type="scientific">Heliobacterium modesticaldum (strain ATCC 51547 / Ice1)</name>
    <dbReference type="NCBI Taxonomy" id="498761"/>
    <lineage>
        <taxon>Bacteria</taxon>
        <taxon>Bacillati</taxon>
        <taxon>Bacillota</taxon>
        <taxon>Clostridia</taxon>
        <taxon>Eubacteriales</taxon>
        <taxon>Heliobacteriaceae</taxon>
        <taxon>Heliomicrobium</taxon>
    </lineage>
</organism>
<dbReference type="EC" id="2.7.1.23" evidence="1"/>
<dbReference type="EMBL" id="CP000930">
    <property type="protein sequence ID" value="ABZ82917.1"/>
    <property type="molecule type" value="Genomic_DNA"/>
</dbReference>
<dbReference type="RefSeq" id="WP_012281635.1">
    <property type="nucleotide sequence ID" value="NC_010337.2"/>
</dbReference>
<dbReference type="SMR" id="B0TEJ8"/>
<dbReference type="STRING" id="498761.HM1_0298"/>
<dbReference type="KEGG" id="hmo:HM1_0298"/>
<dbReference type="eggNOG" id="COG0061">
    <property type="taxonomic scope" value="Bacteria"/>
</dbReference>
<dbReference type="HOGENOM" id="CLU_008831_0_0_9"/>
<dbReference type="Proteomes" id="UP000008550">
    <property type="component" value="Chromosome"/>
</dbReference>
<dbReference type="GO" id="GO:0005737">
    <property type="term" value="C:cytoplasm"/>
    <property type="evidence" value="ECO:0007669"/>
    <property type="project" value="UniProtKB-SubCell"/>
</dbReference>
<dbReference type="GO" id="GO:0005524">
    <property type="term" value="F:ATP binding"/>
    <property type="evidence" value="ECO:0007669"/>
    <property type="project" value="UniProtKB-KW"/>
</dbReference>
<dbReference type="GO" id="GO:0046872">
    <property type="term" value="F:metal ion binding"/>
    <property type="evidence" value="ECO:0007669"/>
    <property type="project" value="UniProtKB-UniRule"/>
</dbReference>
<dbReference type="GO" id="GO:0051287">
    <property type="term" value="F:NAD binding"/>
    <property type="evidence" value="ECO:0007669"/>
    <property type="project" value="UniProtKB-ARBA"/>
</dbReference>
<dbReference type="GO" id="GO:0003951">
    <property type="term" value="F:NAD+ kinase activity"/>
    <property type="evidence" value="ECO:0007669"/>
    <property type="project" value="UniProtKB-UniRule"/>
</dbReference>
<dbReference type="GO" id="GO:0019674">
    <property type="term" value="P:NAD metabolic process"/>
    <property type="evidence" value="ECO:0007669"/>
    <property type="project" value="InterPro"/>
</dbReference>
<dbReference type="GO" id="GO:0006741">
    <property type="term" value="P:NADP biosynthetic process"/>
    <property type="evidence" value="ECO:0007669"/>
    <property type="project" value="UniProtKB-UniRule"/>
</dbReference>
<dbReference type="FunFam" id="2.60.200.30:FF:000009">
    <property type="entry name" value="Poly(P)/ATP NAD kinase"/>
    <property type="match status" value="1"/>
</dbReference>
<dbReference type="Gene3D" id="3.40.50.10330">
    <property type="entry name" value="Probable inorganic polyphosphate/atp-NAD kinase, domain 1"/>
    <property type="match status" value="1"/>
</dbReference>
<dbReference type="Gene3D" id="2.60.200.30">
    <property type="entry name" value="Probable inorganic polyphosphate/atp-NAD kinase, domain 2"/>
    <property type="match status" value="1"/>
</dbReference>
<dbReference type="HAMAP" id="MF_00361">
    <property type="entry name" value="NAD_kinase"/>
    <property type="match status" value="1"/>
</dbReference>
<dbReference type="InterPro" id="IPR017438">
    <property type="entry name" value="ATP-NAD_kinase_N"/>
</dbReference>
<dbReference type="InterPro" id="IPR017437">
    <property type="entry name" value="ATP-NAD_kinase_PpnK-typ_C"/>
</dbReference>
<dbReference type="InterPro" id="IPR016064">
    <property type="entry name" value="NAD/diacylglycerol_kinase_sf"/>
</dbReference>
<dbReference type="InterPro" id="IPR002504">
    <property type="entry name" value="NADK"/>
</dbReference>
<dbReference type="PANTHER" id="PTHR20275">
    <property type="entry name" value="NAD KINASE"/>
    <property type="match status" value="1"/>
</dbReference>
<dbReference type="PANTHER" id="PTHR20275:SF0">
    <property type="entry name" value="NAD KINASE"/>
    <property type="match status" value="1"/>
</dbReference>
<dbReference type="Pfam" id="PF01513">
    <property type="entry name" value="NAD_kinase"/>
    <property type="match status" value="1"/>
</dbReference>
<dbReference type="Pfam" id="PF20143">
    <property type="entry name" value="NAD_kinase_C"/>
    <property type="match status" value="1"/>
</dbReference>
<dbReference type="SUPFAM" id="SSF111331">
    <property type="entry name" value="NAD kinase/diacylglycerol kinase-like"/>
    <property type="match status" value="1"/>
</dbReference>
<keyword id="KW-0067">ATP-binding</keyword>
<keyword id="KW-0963">Cytoplasm</keyword>
<keyword id="KW-0418">Kinase</keyword>
<keyword id="KW-0520">NAD</keyword>
<keyword id="KW-0521">NADP</keyword>
<keyword id="KW-0547">Nucleotide-binding</keyword>
<keyword id="KW-1185">Reference proteome</keyword>
<keyword id="KW-0808">Transferase</keyword>